<protein>
    <recommendedName>
        <fullName evidence="1">Argininosuccinate lyase</fullName>
        <shortName evidence="1">ASAL</shortName>
        <ecNumber evidence="1">4.3.2.1</ecNumber>
    </recommendedName>
    <alternativeName>
        <fullName evidence="1">Arginosuccinase</fullName>
    </alternativeName>
</protein>
<organism>
    <name type="scientific">Koribacter versatilis (strain Ellin345)</name>
    <dbReference type="NCBI Taxonomy" id="204669"/>
    <lineage>
        <taxon>Bacteria</taxon>
        <taxon>Pseudomonadati</taxon>
        <taxon>Acidobacteriota</taxon>
        <taxon>Terriglobia</taxon>
        <taxon>Terriglobales</taxon>
        <taxon>Candidatus Korobacteraceae</taxon>
        <taxon>Candidatus Korobacter</taxon>
    </lineage>
</organism>
<accession>Q1IIZ3</accession>
<keyword id="KW-0028">Amino-acid biosynthesis</keyword>
<keyword id="KW-0055">Arginine biosynthesis</keyword>
<keyword id="KW-0963">Cytoplasm</keyword>
<keyword id="KW-0456">Lyase</keyword>
<keyword id="KW-1185">Reference proteome</keyword>
<sequence length="464" mass="50204">MKMWSGRFSQSLDPEFESWQRSLPFDKKLLRHEVAASGAHATALAKAGVLSSEELALIKSGLAQIARDGAPDADDPSIEDVHHFVESRLIEIAGEVGRKLHTGRSRNEQIATDLRLYVREQIDETTLLIADVIAALIERAESVGEAAMPSYTHLQRAEPVLIAHWLLAYAEMFFRDITRLADCRKRANLCPLGSAAVAGTFVALDRGYIATLLGFDAPTANSIDATSDRDFAIEFVQSLSVIGLHLSRMAEEMILFATTEFGFLQLPEQFATGSSAMPQKKNPDSLELVRGKSAALLAHAMQLAVTLKALPLAYNKDMQETQQPVFASAEECIAMLRITAGFLRAVKFNTAVMHTAASTGYMNAMAAAGYLVQQGIPFRRAHELIGAAVKLAVEKHCELHDLSADDLRNLGIAADDSFYAALQLPAVLAQKNVAGGTAPNQVSTALKAAKKKLIAIGEVQHVSA</sequence>
<proteinExistence type="inferred from homology"/>
<dbReference type="EC" id="4.3.2.1" evidence="1"/>
<dbReference type="EMBL" id="CP000360">
    <property type="protein sequence ID" value="ABF43157.1"/>
    <property type="molecule type" value="Genomic_DNA"/>
</dbReference>
<dbReference type="RefSeq" id="WP_011524956.1">
    <property type="nucleotide sequence ID" value="NC_008009.1"/>
</dbReference>
<dbReference type="SMR" id="Q1IIZ3"/>
<dbReference type="STRING" id="204669.Acid345_4157"/>
<dbReference type="EnsemblBacteria" id="ABF43157">
    <property type="protein sequence ID" value="ABF43157"/>
    <property type="gene ID" value="Acid345_4157"/>
</dbReference>
<dbReference type="KEGG" id="aba:Acid345_4157"/>
<dbReference type="eggNOG" id="COG0165">
    <property type="taxonomic scope" value="Bacteria"/>
</dbReference>
<dbReference type="HOGENOM" id="CLU_027272_2_3_0"/>
<dbReference type="OrthoDB" id="9769623at2"/>
<dbReference type="UniPathway" id="UPA00068">
    <property type="reaction ID" value="UER00114"/>
</dbReference>
<dbReference type="Proteomes" id="UP000002432">
    <property type="component" value="Chromosome"/>
</dbReference>
<dbReference type="GO" id="GO:0005829">
    <property type="term" value="C:cytosol"/>
    <property type="evidence" value="ECO:0007669"/>
    <property type="project" value="TreeGrafter"/>
</dbReference>
<dbReference type="GO" id="GO:0004056">
    <property type="term" value="F:argininosuccinate lyase activity"/>
    <property type="evidence" value="ECO:0007669"/>
    <property type="project" value="UniProtKB-UniRule"/>
</dbReference>
<dbReference type="GO" id="GO:0042450">
    <property type="term" value="P:arginine biosynthetic process via ornithine"/>
    <property type="evidence" value="ECO:0007669"/>
    <property type="project" value="InterPro"/>
</dbReference>
<dbReference type="GO" id="GO:0006526">
    <property type="term" value="P:L-arginine biosynthetic process"/>
    <property type="evidence" value="ECO:0007669"/>
    <property type="project" value="UniProtKB-UniRule"/>
</dbReference>
<dbReference type="CDD" id="cd01359">
    <property type="entry name" value="Argininosuccinate_lyase"/>
    <property type="match status" value="1"/>
</dbReference>
<dbReference type="FunFam" id="1.20.200.10:FF:000015">
    <property type="entry name" value="argininosuccinate lyase isoform X2"/>
    <property type="match status" value="1"/>
</dbReference>
<dbReference type="Gene3D" id="1.10.40.30">
    <property type="entry name" value="Fumarase/aspartase (C-terminal domain)"/>
    <property type="match status" value="1"/>
</dbReference>
<dbReference type="Gene3D" id="1.20.200.10">
    <property type="entry name" value="Fumarase/aspartase (Central domain)"/>
    <property type="match status" value="1"/>
</dbReference>
<dbReference type="Gene3D" id="1.10.275.10">
    <property type="entry name" value="Fumarase/aspartase (N-terminal domain)"/>
    <property type="match status" value="1"/>
</dbReference>
<dbReference type="HAMAP" id="MF_00006">
    <property type="entry name" value="Arg_succ_lyase"/>
    <property type="match status" value="1"/>
</dbReference>
<dbReference type="InterPro" id="IPR029419">
    <property type="entry name" value="Arg_succ_lyase_C"/>
</dbReference>
<dbReference type="InterPro" id="IPR009049">
    <property type="entry name" value="Argininosuccinate_lyase"/>
</dbReference>
<dbReference type="InterPro" id="IPR024083">
    <property type="entry name" value="Fumarase/histidase_N"/>
</dbReference>
<dbReference type="InterPro" id="IPR020557">
    <property type="entry name" value="Fumarate_lyase_CS"/>
</dbReference>
<dbReference type="InterPro" id="IPR000362">
    <property type="entry name" value="Fumarate_lyase_fam"/>
</dbReference>
<dbReference type="InterPro" id="IPR022761">
    <property type="entry name" value="Fumarate_lyase_N"/>
</dbReference>
<dbReference type="InterPro" id="IPR008948">
    <property type="entry name" value="L-Aspartase-like"/>
</dbReference>
<dbReference type="NCBIfam" id="TIGR00838">
    <property type="entry name" value="argH"/>
    <property type="match status" value="1"/>
</dbReference>
<dbReference type="PANTHER" id="PTHR43814">
    <property type="entry name" value="ARGININOSUCCINATE LYASE"/>
    <property type="match status" value="1"/>
</dbReference>
<dbReference type="PANTHER" id="PTHR43814:SF1">
    <property type="entry name" value="ARGININOSUCCINATE LYASE"/>
    <property type="match status" value="1"/>
</dbReference>
<dbReference type="Pfam" id="PF14698">
    <property type="entry name" value="ASL_C2"/>
    <property type="match status" value="1"/>
</dbReference>
<dbReference type="Pfam" id="PF00206">
    <property type="entry name" value="Lyase_1"/>
    <property type="match status" value="1"/>
</dbReference>
<dbReference type="PRINTS" id="PR00145">
    <property type="entry name" value="ARGSUCLYASE"/>
</dbReference>
<dbReference type="PRINTS" id="PR00149">
    <property type="entry name" value="FUMRATELYASE"/>
</dbReference>
<dbReference type="SUPFAM" id="SSF48557">
    <property type="entry name" value="L-aspartase-like"/>
    <property type="match status" value="1"/>
</dbReference>
<dbReference type="PROSITE" id="PS00163">
    <property type="entry name" value="FUMARATE_LYASES"/>
    <property type="match status" value="1"/>
</dbReference>
<feature type="chain" id="PRO_0000321422" description="Argininosuccinate lyase">
    <location>
        <begin position="1"/>
        <end position="464"/>
    </location>
</feature>
<comment type="catalytic activity">
    <reaction evidence="1">
        <text>2-(N(omega)-L-arginino)succinate = fumarate + L-arginine</text>
        <dbReference type="Rhea" id="RHEA:24020"/>
        <dbReference type="ChEBI" id="CHEBI:29806"/>
        <dbReference type="ChEBI" id="CHEBI:32682"/>
        <dbReference type="ChEBI" id="CHEBI:57472"/>
        <dbReference type="EC" id="4.3.2.1"/>
    </reaction>
</comment>
<comment type="pathway">
    <text evidence="1">Amino-acid biosynthesis; L-arginine biosynthesis; L-arginine from L-ornithine and carbamoyl phosphate: step 3/3.</text>
</comment>
<comment type="subcellular location">
    <subcellularLocation>
        <location evidence="1">Cytoplasm</location>
    </subcellularLocation>
</comment>
<comment type="similarity">
    <text evidence="1">Belongs to the lyase 1 family. Argininosuccinate lyase subfamily.</text>
</comment>
<evidence type="ECO:0000255" key="1">
    <source>
        <dbReference type="HAMAP-Rule" id="MF_00006"/>
    </source>
</evidence>
<reference key="1">
    <citation type="journal article" date="2009" name="Appl. Environ. Microbiol.">
        <title>Three genomes from the phylum Acidobacteria provide insight into the lifestyles of these microorganisms in soils.</title>
        <authorList>
            <person name="Ward N.L."/>
            <person name="Challacombe J.F."/>
            <person name="Janssen P.H."/>
            <person name="Henrissat B."/>
            <person name="Coutinho P.M."/>
            <person name="Wu M."/>
            <person name="Xie G."/>
            <person name="Haft D.H."/>
            <person name="Sait M."/>
            <person name="Badger J."/>
            <person name="Barabote R.D."/>
            <person name="Bradley B."/>
            <person name="Brettin T.S."/>
            <person name="Brinkac L.M."/>
            <person name="Bruce D."/>
            <person name="Creasy T."/>
            <person name="Daugherty S.C."/>
            <person name="Davidsen T.M."/>
            <person name="DeBoy R.T."/>
            <person name="Detter J.C."/>
            <person name="Dodson R.J."/>
            <person name="Durkin A.S."/>
            <person name="Ganapathy A."/>
            <person name="Gwinn-Giglio M."/>
            <person name="Han C.S."/>
            <person name="Khouri H."/>
            <person name="Kiss H."/>
            <person name="Kothari S.P."/>
            <person name="Madupu R."/>
            <person name="Nelson K.E."/>
            <person name="Nelson W.C."/>
            <person name="Paulsen I."/>
            <person name="Penn K."/>
            <person name="Ren Q."/>
            <person name="Rosovitz M.J."/>
            <person name="Selengut J.D."/>
            <person name="Shrivastava S."/>
            <person name="Sullivan S.A."/>
            <person name="Tapia R."/>
            <person name="Thompson L.S."/>
            <person name="Watkins K.L."/>
            <person name="Yang Q."/>
            <person name="Yu C."/>
            <person name="Zafar N."/>
            <person name="Zhou L."/>
            <person name="Kuske C.R."/>
        </authorList>
    </citation>
    <scope>NUCLEOTIDE SEQUENCE [LARGE SCALE GENOMIC DNA]</scope>
    <source>
        <strain>Ellin345</strain>
    </source>
</reference>
<gene>
    <name evidence="1" type="primary">argH</name>
    <name type="ordered locus">Acid345_4157</name>
</gene>
<name>ARLY_KORVE</name>